<sequence length="102" mass="11749">MQKARIKIASTNVRSLDEVANQIKQIAERTGVRMSGPIPLPTKRIRITTRKSPDGEGSATFDRWELRVHKRLIDIEADERAMRQIMRIRVPEDVTIEIELIS</sequence>
<name>RS10_PYRWO</name>
<protein>
    <recommendedName>
        <fullName evidence="1">Small ribosomal subunit protein uS10</fullName>
    </recommendedName>
    <alternativeName>
        <fullName evidence="3">30S ribosomal protein S10</fullName>
    </alternativeName>
</protein>
<feature type="chain" id="PRO_0000146658" description="Small ribosomal subunit protein uS10">
    <location>
        <begin position="1"/>
        <end position="102"/>
    </location>
</feature>
<feature type="region of interest" description="Disordered" evidence="2">
    <location>
        <begin position="33"/>
        <end position="59"/>
    </location>
</feature>
<comment type="function">
    <text evidence="1">Involved in the binding of tRNA to the ribosomes.</text>
</comment>
<comment type="subunit">
    <text evidence="1">Part of the 30S ribosomal subunit.</text>
</comment>
<comment type="similarity">
    <text evidence="1">Belongs to the universal ribosomal protein uS10 family.</text>
</comment>
<proteinExistence type="inferred from homology"/>
<reference key="1">
    <citation type="journal article" date="1991" name="J. Mol. Evol.">
        <title>Nucleotide sequence of a DNA region comprising the gene for elongation factor 1 alpha (EF-1 alpha) from the ultrathermophilic archaeote Pyrococcus woesei: phylogenetic implications.</title>
        <authorList>
            <person name="Creti R."/>
            <person name="Citarella F."/>
            <person name="Tiboni O."/>
            <person name="Sanangelantoni A.M."/>
            <person name="Palm P."/>
            <person name="Cammarano P."/>
        </authorList>
    </citation>
    <scope>NUCLEOTIDE SEQUENCE [GENOMIC DNA]</scope>
</reference>
<evidence type="ECO:0000255" key="1">
    <source>
        <dbReference type="HAMAP-Rule" id="MF_00508"/>
    </source>
</evidence>
<evidence type="ECO:0000256" key="2">
    <source>
        <dbReference type="SAM" id="MobiDB-lite"/>
    </source>
</evidence>
<evidence type="ECO:0000305" key="3"/>
<dbReference type="EMBL" id="X59857">
    <property type="protein sequence ID" value="CAA42518.1"/>
    <property type="molecule type" value="Genomic_DNA"/>
</dbReference>
<dbReference type="PIR" id="S19001">
    <property type="entry name" value="S19001"/>
</dbReference>
<dbReference type="SMR" id="P61886"/>
<dbReference type="GO" id="GO:0015935">
    <property type="term" value="C:small ribosomal subunit"/>
    <property type="evidence" value="ECO:0007669"/>
    <property type="project" value="InterPro"/>
</dbReference>
<dbReference type="GO" id="GO:0003735">
    <property type="term" value="F:structural constituent of ribosome"/>
    <property type="evidence" value="ECO:0007669"/>
    <property type="project" value="InterPro"/>
</dbReference>
<dbReference type="GO" id="GO:0000049">
    <property type="term" value="F:tRNA binding"/>
    <property type="evidence" value="ECO:0007669"/>
    <property type="project" value="UniProtKB-UniRule"/>
</dbReference>
<dbReference type="GO" id="GO:0006412">
    <property type="term" value="P:translation"/>
    <property type="evidence" value="ECO:0007669"/>
    <property type="project" value="UniProtKB-UniRule"/>
</dbReference>
<dbReference type="FunFam" id="3.30.70.600:FF:000004">
    <property type="entry name" value="30S ribosomal protein S10"/>
    <property type="match status" value="1"/>
</dbReference>
<dbReference type="Gene3D" id="3.30.70.600">
    <property type="entry name" value="Ribosomal protein S10 domain"/>
    <property type="match status" value="1"/>
</dbReference>
<dbReference type="HAMAP" id="MF_00508">
    <property type="entry name" value="Ribosomal_uS10"/>
    <property type="match status" value="1"/>
</dbReference>
<dbReference type="InterPro" id="IPR001848">
    <property type="entry name" value="Ribosomal_uS10"/>
</dbReference>
<dbReference type="InterPro" id="IPR018268">
    <property type="entry name" value="Ribosomal_uS10_CS"/>
</dbReference>
<dbReference type="InterPro" id="IPR027486">
    <property type="entry name" value="Ribosomal_uS10_dom"/>
</dbReference>
<dbReference type="InterPro" id="IPR036838">
    <property type="entry name" value="Ribosomal_uS10_dom_sf"/>
</dbReference>
<dbReference type="InterPro" id="IPR005729">
    <property type="entry name" value="Ribosomal_uS10_euk/arc"/>
</dbReference>
<dbReference type="NCBIfam" id="TIGR01046">
    <property type="entry name" value="uS10_euk_arch"/>
    <property type="match status" value="1"/>
</dbReference>
<dbReference type="PANTHER" id="PTHR11700">
    <property type="entry name" value="30S RIBOSOMAL PROTEIN S10 FAMILY MEMBER"/>
    <property type="match status" value="1"/>
</dbReference>
<dbReference type="Pfam" id="PF00338">
    <property type="entry name" value="Ribosomal_S10"/>
    <property type="match status" value="1"/>
</dbReference>
<dbReference type="PRINTS" id="PR00971">
    <property type="entry name" value="RIBOSOMALS10"/>
</dbReference>
<dbReference type="SMART" id="SM01403">
    <property type="entry name" value="Ribosomal_S10"/>
    <property type="match status" value="1"/>
</dbReference>
<dbReference type="SUPFAM" id="SSF54999">
    <property type="entry name" value="Ribosomal protein S10"/>
    <property type="match status" value="1"/>
</dbReference>
<dbReference type="PROSITE" id="PS00361">
    <property type="entry name" value="RIBOSOMAL_S10"/>
    <property type="match status" value="1"/>
</dbReference>
<organism>
    <name type="scientific">Pyrococcus woesei</name>
    <dbReference type="NCBI Taxonomy" id="2262"/>
    <lineage>
        <taxon>Archaea</taxon>
        <taxon>Methanobacteriati</taxon>
        <taxon>Methanobacteriota</taxon>
        <taxon>Thermococci</taxon>
        <taxon>Thermococcales</taxon>
        <taxon>Thermococcaceae</taxon>
        <taxon>Pyrococcus</taxon>
    </lineage>
</organism>
<accession>P61886</accession>
<accession>P26753</accession>
<gene>
    <name evidence="1" type="primary">rps10</name>
</gene>
<keyword id="KW-0687">Ribonucleoprotein</keyword>
<keyword id="KW-0689">Ribosomal protein</keyword>